<feature type="chain" id="PRO_0000257907" description="Cytochrome b">
    <location>
        <begin position="1"/>
        <end position="379"/>
    </location>
</feature>
<feature type="transmembrane region" description="Helical" evidence="2">
    <location>
        <begin position="33"/>
        <end position="53"/>
    </location>
</feature>
<feature type="transmembrane region" description="Helical" evidence="2">
    <location>
        <begin position="77"/>
        <end position="98"/>
    </location>
</feature>
<feature type="transmembrane region" description="Helical" evidence="2">
    <location>
        <begin position="113"/>
        <end position="133"/>
    </location>
</feature>
<feature type="transmembrane region" description="Helical" evidence="2">
    <location>
        <begin position="178"/>
        <end position="198"/>
    </location>
</feature>
<feature type="transmembrane region" description="Helical" evidence="2">
    <location>
        <begin position="226"/>
        <end position="246"/>
    </location>
</feature>
<feature type="transmembrane region" description="Helical" evidence="2">
    <location>
        <begin position="288"/>
        <end position="308"/>
    </location>
</feature>
<feature type="transmembrane region" description="Helical" evidence="2">
    <location>
        <begin position="320"/>
        <end position="340"/>
    </location>
</feature>
<feature type="transmembrane region" description="Helical" evidence="2">
    <location>
        <begin position="347"/>
        <end position="367"/>
    </location>
</feature>
<feature type="binding site" description="axial binding residue" evidence="2">
    <location>
        <position position="83"/>
    </location>
    <ligand>
        <name>heme b</name>
        <dbReference type="ChEBI" id="CHEBI:60344"/>
        <label>b562</label>
    </ligand>
    <ligandPart>
        <name>Fe</name>
        <dbReference type="ChEBI" id="CHEBI:18248"/>
    </ligandPart>
</feature>
<feature type="binding site" description="axial binding residue" evidence="2">
    <location>
        <position position="97"/>
    </location>
    <ligand>
        <name>heme b</name>
        <dbReference type="ChEBI" id="CHEBI:60344"/>
        <label>b566</label>
    </ligand>
    <ligandPart>
        <name>Fe</name>
        <dbReference type="ChEBI" id="CHEBI:18248"/>
    </ligandPart>
</feature>
<feature type="binding site" description="axial binding residue" evidence="2">
    <location>
        <position position="182"/>
    </location>
    <ligand>
        <name>heme b</name>
        <dbReference type="ChEBI" id="CHEBI:60344"/>
        <label>b562</label>
    </ligand>
    <ligandPart>
        <name>Fe</name>
        <dbReference type="ChEBI" id="CHEBI:18248"/>
    </ligandPart>
</feature>
<feature type="binding site" description="axial binding residue" evidence="2">
    <location>
        <position position="196"/>
    </location>
    <ligand>
        <name>heme b</name>
        <dbReference type="ChEBI" id="CHEBI:60344"/>
        <label>b566</label>
    </ligand>
    <ligandPart>
        <name>Fe</name>
        <dbReference type="ChEBI" id="CHEBI:18248"/>
    </ligandPart>
</feature>
<feature type="binding site" evidence="2">
    <location>
        <position position="201"/>
    </location>
    <ligand>
        <name>a ubiquinone</name>
        <dbReference type="ChEBI" id="CHEBI:16389"/>
    </ligand>
</feature>
<keyword id="KW-0249">Electron transport</keyword>
<keyword id="KW-0349">Heme</keyword>
<keyword id="KW-0408">Iron</keyword>
<keyword id="KW-0472">Membrane</keyword>
<keyword id="KW-0479">Metal-binding</keyword>
<keyword id="KW-0496">Mitochondrion</keyword>
<keyword id="KW-0999">Mitochondrion inner membrane</keyword>
<keyword id="KW-0679">Respiratory chain</keyword>
<keyword id="KW-0812">Transmembrane</keyword>
<keyword id="KW-1133">Transmembrane helix</keyword>
<keyword id="KW-0813">Transport</keyword>
<keyword id="KW-0830">Ubiquinone</keyword>
<accession>Q8W9J6</accession>
<protein>
    <recommendedName>
        <fullName>Cytochrome b</fullName>
    </recommendedName>
    <alternativeName>
        <fullName>Complex III subunit 3</fullName>
    </alternativeName>
    <alternativeName>
        <fullName>Complex III subunit III</fullName>
    </alternativeName>
    <alternativeName>
        <fullName>Cytochrome b-c1 complex subunit 3</fullName>
    </alternativeName>
    <alternativeName>
        <fullName>Ubiquinol-cytochrome-c reductase complex cytochrome b subunit</fullName>
    </alternativeName>
</protein>
<organism>
    <name type="scientific">Idiurus macrotis</name>
    <name type="common">Long-eared scaly-tailed flying squirrel</name>
    <dbReference type="NCBI Taxonomy" id="101667"/>
    <lineage>
        <taxon>Eukaryota</taxon>
        <taxon>Metazoa</taxon>
        <taxon>Chordata</taxon>
        <taxon>Craniata</taxon>
        <taxon>Vertebrata</taxon>
        <taxon>Euteleostomi</taxon>
        <taxon>Mammalia</taxon>
        <taxon>Eutheria</taxon>
        <taxon>Euarchontoglires</taxon>
        <taxon>Glires</taxon>
        <taxon>Rodentia</taxon>
        <taxon>Anomaluromorpha</taxon>
        <taxon>Anomaluridae</taxon>
        <taxon>Idiurus</taxon>
    </lineage>
</organism>
<comment type="function">
    <text evidence="2">Component of the ubiquinol-cytochrome c reductase complex (complex III or cytochrome b-c1 complex) that is part of the mitochondrial respiratory chain. The b-c1 complex mediates electron transfer from ubiquinol to cytochrome c. Contributes to the generation of a proton gradient across the mitochondrial membrane that is then used for ATP synthesis.</text>
</comment>
<comment type="cofactor">
    <cofactor evidence="2">
        <name>heme b</name>
        <dbReference type="ChEBI" id="CHEBI:60344"/>
    </cofactor>
    <text evidence="2">Binds 2 heme b groups non-covalently.</text>
</comment>
<comment type="subunit">
    <text evidence="2">The cytochrome bc1 complex contains 11 subunits: 3 respiratory subunits (MT-CYB, CYC1 and UQCRFS1), 2 core proteins (UQCRC1 and UQCRC2) and 6 low-molecular weight proteins (UQCRH/QCR6, UQCRB/QCR7, UQCRQ/QCR8, UQCR10/QCR9, UQCR11/QCR10 and a cleavage product of UQCRFS1). This cytochrome bc1 complex then forms a dimer.</text>
</comment>
<comment type="subcellular location">
    <subcellularLocation>
        <location evidence="2">Mitochondrion inner membrane</location>
        <topology evidence="2">Multi-pass membrane protein</topology>
    </subcellularLocation>
</comment>
<comment type="miscellaneous">
    <text evidence="1">Heme 1 (or BL or b562) is low-potential and absorbs at about 562 nm, and heme 2 (or BH or b566) is high-potential and absorbs at about 566 nm.</text>
</comment>
<comment type="similarity">
    <text evidence="3 4">Belongs to the cytochrome b family.</text>
</comment>
<comment type="caution">
    <text evidence="2">The full-length protein contains only eight transmembrane helices, not nine as predicted by bioinformatics tools.</text>
</comment>
<geneLocation type="mitochondrion"/>
<proteinExistence type="inferred from homology"/>
<sequence length="379" mass="42750">MANLRKTHPLAKIFNNSFIDLPTPSNISSWWNFGSLLGLCLIIQIMTGLFLAMHYTPDTSTAFSSVAHICRDVNYGWLIRYMHANGASMFFICLFLHVGRGLYYGSYMLLETWNIGILLLFTTMATAFMGYVLPWGQMSFWGATVITNLLSAIPYIGTNIVEWIWGGFSVDKATLNRFFTFHFILPFIITALAMIHLLFLHETGSNNPSGLSSESDKIPFHPYFTIKDILGGMLLIMLLMLLVLFFPDILGDPDNYIPANPLITPPHIKPEWYFLFAYAILRSIPNKLGGVIALIMSILILAIIPTIHNSKQRSLTFRPIGQIAFWSLIADLATLTWIGGQPIEHPFMMIGQLASTIYFLILLVLMPATSLLENKLLKW</sequence>
<dbReference type="EMBL" id="AJ389525">
    <property type="protein sequence ID" value="CAC80520.1"/>
    <property type="molecule type" value="Genomic_DNA"/>
</dbReference>
<dbReference type="SMR" id="Q8W9J6"/>
<dbReference type="GO" id="GO:0005743">
    <property type="term" value="C:mitochondrial inner membrane"/>
    <property type="evidence" value="ECO:0007669"/>
    <property type="project" value="UniProtKB-SubCell"/>
</dbReference>
<dbReference type="GO" id="GO:0045275">
    <property type="term" value="C:respiratory chain complex III"/>
    <property type="evidence" value="ECO:0007669"/>
    <property type="project" value="InterPro"/>
</dbReference>
<dbReference type="GO" id="GO:0046872">
    <property type="term" value="F:metal ion binding"/>
    <property type="evidence" value="ECO:0007669"/>
    <property type="project" value="UniProtKB-KW"/>
</dbReference>
<dbReference type="GO" id="GO:0008121">
    <property type="term" value="F:ubiquinol-cytochrome-c reductase activity"/>
    <property type="evidence" value="ECO:0007669"/>
    <property type="project" value="InterPro"/>
</dbReference>
<dbReference type="GO" id="GO:0006122">
    <property type="term" value="P:mitochondrial electron transport, ubiquinol to cytochrome c"/>
    <property type="evidence" value="ECO:0007669"/>
    <property type="project" value="TreeGrafter"/>
</dbReference>
<dbReference type="CDD" id="cd00290">
    <property type="entry name" value="cytochrome_b_C"/>
    <property type="match status" value="1"/>
</dbReference>
<dbReference type="CDD" id="cd00284">
    <property type="entry name" value="Cytochrome_b_N"/>
    <property type="match status" value="1"/>
</dbReference>
<dbReference type="FunFam" id="1.20.810.10:FF:000002">
    <property type="entry name" value="Cytochrome b"/>
    <property type="match status" value="1"/>
</dbReference>
<dbReference type="Gene3D" id="1.20.810.10">
    <property type="entry name" value="Cytochrome Bc1 Complex, Chain C"/>
    <property type="match status" value="1"/>
</dbReference>
<dbReference type="InterPro" id="IPR005798">
    <property type="entry name" value="Cyt_b/b6_C"/>
</dbReference>
<dbReference type="InterPro" id="IPR036150">
    <property type="entry name" value="Cyt_b/b6_C_sf"/>
</dbReference>
<dbReference type="InterPro" id="IPR005797">
    <property type="entry name" value="Cyt_b/b6_N"/>
</dbReference>
<dbReference type="InterPro" id="IPR027387">
    <property type="entry name" value="Cytb/b6-like_sf"/>
</dbReference>
<dbReference type="InterPro" id="IPR030689">
    <property type="entry name" value="Cytochrome_b"/>
</dbReference>
<dbReference type="InterPro" id="IPR048260">
    <property type="entry name" value="Cytochrome_b_C_euk/bac"/>
</dbReference>
<dbReference type="InterPro" id="IPR048259">
    <property type="entry name" value="Cytochrome_b_N_euk/bac"/>
</dbReference>
<dbReference type="InterPro" id="IPR016174">
    <property type="entry name" value="Di-haem_cyt_TM"/>
</dbReference>
<dbReference type="PANTHER" id="PTHR19271">
    <property type="entry name" value="CYTOCHROME B"/>
    <property type="match status" value="1"/>
</dbReference>
<dbReference type="PANTHER" id="PTHR19271:SF16">
    <property type="entry name" value="CYTOCHROME B"/>
    <property type="match status" value="1"/>
</dbReference>
<dbReference type="Pfam" id="PF00032">
    <property type="entry name" value="Cytochrom_B_C"/>
    <property type="match status" value="1"/>
</dbReference>
<dbReference type="Pfam" id="PF00033">
    <property type="entry name" value="Cytochrome_B"/>
    <property type="match status" value="1"/>
</dbReference>
<dbReference type="PIRSF" id="PIRSF038885">
    <property type="entry name" value="COB"/>
    <property type="match status" value="1"/>
</dbReference>
<dbReference type="SUPFAM" id="SSF81648">
    <property type="entry name" value="a domain/subunit of cytochrome bc1 complex (Ubiquinol-cytochrome c reductase)"/>
    <property type="match status" value="1"/>
</dbReference>
<dbReference type="SUPFAM" id="SSF81342">
    <property type="entry name" value="Transmembrane di-heme cytochromes"/>
    <property type="match status" value="1"/>
</dbReference>
<dbReference type="PROSITE" id="PS51003">
    <property type="entry name" value="CYTB_CTER"/>
    <property type="match status" value="1"/>
</dbReference>
<dbReference type="PROSITE" id="PS51002">
    <property type="entry name" value="CYTB_NTER"/>
    <property type="match status" value="1"/>
</dbReference>
<gene>
    <name type="primary">MT-CYB</name>
    <name type="synonym">COB</name>
    <name type="synonym">CYTB</name>
    <name type="synonym">MTCYB</name>
</gene>
<name>CYB_IDIMA</name>
<reference key="1">
    <citation type="journal article" date="2002" name="Mol. Phylogenet. Evol.">
        <title>Molecular systematics of sciurognathi (rodentia): the mitochondrial cytochrome b and 12S rRNA genes support the Anomaluroidea (Pedetidae and Anomaluridae).</title>
        <authorList>
            <person name="Montgelard C."/>
            <person name="Bentz S."/>
            <person name="Tirard C."/>
            <person name="Verneau O."/>
            <person name="Catzeflis F.M."/>
        </authorList>
    </citation>
    <scope>NUCLEOTIDE SEQUENCE [GENOMIC DNA]</scope>
</reference>
<evidence type="ECO:0000250" key="1"/>
<evidence type="ECO:0000250" key="2">
    <source>
        <dbReference type="UniProtKB" id="P00157"/>
    </source>
</evidence>
<evidence type="ECO:0000255" key="3">
    <source>
        <dbReference type="PROSITE-ProRule" id="PRU00967"/>
    </source>
</evidence>
<evidence type="ECO:0000255" key="4">
    <source>
        <dbReference type="PROSITE-ProRule" id="PRU00968"/>
    </source>
</evidence>